<keyword id="KW-0963">Cytoplasm</keyword>
<keyword id="KW-0448">Lipopolysaccharide biosynthesis</keyword>
<keyword id="KW-0548">Nucleotidyltransferase</keyword>
<keyword id="KW-0808">Transferase</keyword>
<dbReference type="EC" id="2.7.7.38" evidence="1"/>
<dbReference type="EMBL" id="CP000323">
    <property type="protein sequence ID" value="ABE74845.1"/>
    <property type="molecule type" value="Genomic_DNA"/>
</dbReference>
<dbReference type="RefSeq" id="WP_011513401.1">
    <property type="nucleotide sequence ID" value="NC_007969.1"/>
</dbReference>
<dbReference type="SMR" id="Q1QBV8"/>
<dbReference type="STRING" id="335284.Pcryo_1064"/>
<dbReference type="KEGG" id="pcr:Pcryo_1064"/>
<dbReference type="eggNOG" id="COG1212">
    <property type="taxonomic scope" value="Bacteria"/>
</dbReference>
<dbReference type="HOGENOM" id="CLU_065038_1_0_6"/>
<dbReference type="UniPathway" id="UPA00030"/>
<dbReference type="UniPathway" id="UPA00358">
    <property type="reaction ID" value="UER00476"/>
</dbReference>
<dbReference type="Proteomes" id="UP000002425">
    <property type="component" value="Chromosome"/>
</dbReference>
<dbReference type="GO" id="GO:0005829">
    <property type="term" value="C:cytosol"/>
    <property type="evidence" value="ECO:0007669"/>
    <property type="project" value="TreeGrafter"/>
</dbReference>
<dbReference type="GO" id="GO:0008690">
    <property type="term" value="F:3-deoxy-manno-octulosonate cytidylyltransferase activity"/>
    <property type="evidence" value="ECO:0007669"/>
    <property type="project" value="UniProtKB-UniRule"/>
</dbReference>
<dbReference type="GO" id="GO:0033468">
    <property type="term" value="P:CMP-keto-3-deoxy-D-manno-octulosonic acid biosynthetic process"/>
    <property type="evidence" value="ECO:0007669"/>
    <property type="project" value="UniProtKB-UniRule"/>
</dbReference>
<dbReference type="GO" id="GO:0009103">
    <property type="term" value="P:lipopolysaccharide biosynthetic process"/>
    <property type="evidence" value="ECO:0007669"/>
    <property type="project" value="UniProtKB-UniRule"/>
</dbReference>
<dbReference type="CDD" id="cd02517">
    <property type="entry name" value="CMP-KDO-Synthetase"/>
    <property type="match status" value="1"/>
</dbReference>
<dbReference type="FunFam" id="3.90.550.10:FF:000011">
    <property type="entry name" value="3-deoxy-manno-octulosonate cytidylyltransferase"/>
    <property type="match status" value="1"/>
</dbReference>
<dbReference type="Gene3D" id="3.90.550.10">
    <property type="entry name" value="Spore Coat Polysaccharide Biosynthesis Protein SpsA, Chain A"/>
    <property type="match status" value="1"/>
</dbReference>
<dbReference type="HAMAP" id="MF_00057">
    <property type="entry name" value="KdsB"/>
    <property type="match status" value="1"/>
</dbReference>
<dbReference type="InterPro" id="IPR003329">
    <property type="entry name" value="Cytidylyl_trans"/>
</dbReference>
<dbReference type="InterPro" id="IPR004528">
    <property type="entry name" value="KdsB"/>
</dbReference>
<dbReference type="InterPro" id="IPR029044">
    <property type="entry name" value="Nucleotide-diphossugar_trans"/>
</dbReference>
<dbReference type="NCBIfam" id="TIGR00466">
    <property type="entry name" value="kdsB"/>
    <property type="match status" value="1"/>
</dbReference>
<dbReference type="NCBIfam" id="NF003952">
    <property type="entry name" value="PRK05450.1-5"/>
    <property type="match status" value="1"/>
</dbReference>
<dbReference type="NCBIfam" id="NF009905">
    <property type="entry name" value="PRK13368.1"/>
    <property type="match status" value="1"/>
</dbReference>
<dbReference type="PANTHER" id="PTHR42866">
    <property type="entry name" value="3-DEOXY-MANNO-OCTULOSONATE CYTIDYLYLTRANSFERASE"/>
    <property type="match status" value="1"/>
</dbReference>
<dbReference type="PANTHER" id="PTHR42866:SF2">
    <property type="entry name" value="3-DEOXY-MANNO-OCTULOSONATE CYTIDYLYLTRANSFERASE, MITOCHONDRIAL"/>
    <property type="match status" value="1"/>
</dbReference>
<dbReference type="Pfam" id="PF02348">
    <property type="entry name" value="CTP_transf_3"/>
    <property type="match status" value="1"/>
</dbReference>
<dbReference type="SUPFAM" id="SSF53448">
    <property type="entry name" value="Nucleotide-diphospho-sugar transferases"/>
    <property type="match status" value="1"/>
</dbReference>
<reference key="1">
    <citation type="submission" date="2006-03" db="EMBL/GenBank/DDBJ databases">
        <title>Complete sequence of chromosome of Psychrobacter cryohalolentis K5.</title>
        <authorList>
            <consortium name="US DOE Joint Genome Institute"/>
            <person name="Copeland A."/>
            <person name="Lucas S."/>
            <person name="Lapidus A."/>
            <person name="Barry K."/>
            <person name="Detter J.C."/>
            <person name="Glavina T."/>
            <person name="Hammon N."/>
            <person name="Israni S."/>
            <person name="Dalin E."/>
            <person name="Tice H."/>
            <person name="Pitluck S."/>
            <person name="Brettin T."/>
            <person name="Bruce D."/>
            <person name="Han C."/>
            <person name="Tapia R."/>
            <person name="Sims D.R."/>
            <person name="Gilna P."/>
            <person name="Schmutz J."/>
            <person name="Larimer F."/>
            <person name="Land M."/>
            <person name="Hauser L."/>
            <person name="Kyrpides N."/>
            <person name="Kim E."/>
            <person name="Richardson P."/>
        </authorList>
    </citation>
    <scope>NUCLEOTIDE SEQUENCE [LARGE SCALE GENOMIC DNA]</scope>
    <source>
        <strain>ATCC BAA-1226 / DSM 17306 / VKM B-2378 / K5</strain>
    </source>
</reference>
<organism>
    <name type="scientific">Psychrobacter cryohalolentis (strain ATCC BAA-1226 / DSM 17306 / VKM B-2378 / K5)</name>
    <dbReference type="NCBI Taxonomy" id="335284"/>
    <lineage>
        <taxon>Bacteria</taxon>
        <taxon>Pseudomonadati</taxon>
        <taxon>Pseudomonadota</taxon>
        <taxon>Gammaproteobacteria</taxon>
        <taxon>Moraxellales</taxon>
        <taxon>Moraxellaceae</taxon>
        <taxon>Psychrobacter</taxon>
    </lineage>
</organism>
<name>KDSB_PSYCK</name>
<sequence length="268" mass="29571">MSSALMPVKTHIVIPARLKSTRLPNKPLLTIHGKPMILWVAEKARLADFADDMCIATDDESIAKICLDAGFDVVMTSSEHASGTDRLAEVAAIKGWAAHDIVVNMQGDEPLVPPLLLEQVKTLLVQDAESVMATLCEPIEDYDTFMRPSVVKVVSQTSNDQQRALYFSRAPIPCNRDVVLTSENSKQPPKNAYRHLGLYAYRVSLLQQFVHCSQTPLEILESLEQLRVLENGGHIAIAKAACSLPAGVDTQEDLDRLNAMSLTDFQDY</sequence>
<evidence type="ECO:0000255" key="1">
    <source>
        <dbReference type="HAMAP-Rule" id="MF_00057"/>
    </source>
</evidence>
<protein>
    <recommendedName>
        <fullName evidence="1">3-deoxy-manno-octulosonate cytidylyltransferase</fullName>
        <ecNumber evidence="1">2.7.7.38</ecNumber>
    </recommendedName>
    <alternativeName>
        <fullName evidence="1">CMP-2-keto-3-deoxyoctulosonic acid synthase</fullName>
        <shortName evidence="1">CKS</shortName>
        <shortName evidence="1">CMP-KDO synthase</shortName>
    </alternativeName>
</protein>
<proteinExistence type="inferred from homology"/>
<comment type="function">
    <text evidence="1">Activates KDO (a required 8-carbon sugar) for incorporation into bacterial lipopolysaccharide in Gram-negative bacteria.</text>
</comment>
<comment type="catalytic activity">
    <reaction evidence="1">
        <text>3-deoxy-alpha-D-manno-oct-2-ulosonate + CTP = CMP-3-deoxy-beta-D-manno-octulosonate + diphosphate</text>
        <dbReference type="Rhea" id="RHEA:23448"/>
        <dbReference type="ChEBI" id="CHEBI:33019"/>
        <dbReference type="ChEBI" id="CHEBI:37563"/>
        <dbReference type="ChEBI" id="CHEBI:85986"/>
        <dbReference type="ChEBI" id="CHEBI:85987"/>
        <dbReference type="EC" id="2.7.7.38"/>
    </reaction>
</comment>
<comment type="pathway">
    <text evidence="1">Nucleotide-sugar biosynthesis; CMP-3-deoxy-D-manno-octulosonate biosynthesis; CMP-3-deoxy-D-manno-octulosonate from 3-deoxy-D-manno-octulosonate and CTP: step 1/1.</text>
</comment>
<comment type="pathway">
    <text evidence="1">Bacterial outer membrane biogenesis; lipopolysaccharide biosynthesis.</text>
</comment>
<comment type="subcellular location">
    <subcellularLocation>
        <location evidence="1">Cytoplasm</location>
    </subcellularLocation>
</comment>
<comment type="similarity">
    <text evidence="1">Belongs to the KdsB family.</text>
</comment>
<gene>
    <name evidence="1" type="primary">kdsB</name>
    <name type="ordered locus">Pcryo_1064</name>
</gene>
<accession>Q1QBV8</accession>
<feature type="chain" id="PRO_0000370123" description="3-deoxy-manno-octulosonate cytidylyltransferase">
    <location>
        <begin position="1"/>
        <end position="268"/>
    </location>
</feature>